<accession>Q2P764</accession>
<protein>
    <recommendedName>
        <fullName evidence="1">3-isopropylmalate dehydratase small subunit</fullName>
        <ecNumber evidence="1">4.2.1.33</ecNumber>
    </recommendedName>
    <alternativeName>
        <fullName evidence="1">Alpha-IPM isomerase</fullName>
        <shortName evidence="1">IPMI</shortName>
    </alternativeName>
    <alternativeName>
        <fullName evidence="1">Isopropylmalate isomerase</fullName>
    </alternativeName>
</protein>
<evidence type="ECO:0000255" key="1">
    <source>
        <dbReference type="HAMAP-Rule" id="MF_01031"/>
    </source>
</evidence>
<gene>
    <name evidence="1" type="primary">leuD</name>
    <name type="ordered locus">XOO0858</name>
</gene>
<dbReference type="EC" id="4.2.1.33" evidence="1"/>
<dbReference type="EMBL" id="AP008229">
    <property type="protein sequence ID" value="BAE67613.1"/>
    <property type="molecule type" value="Genomic_DNA"/>
</dbReference>
<dbReference type="RefSeq" id="WP_011257807.1">
    <property type="nucleotide sequence ID" value="NC_007705.1"/>
</dbReference>
<dbReference type="SMR" id="Q2P764"/>
<dbReference type="KEGG" id="xom:XOO0858"/>
<dbReference type="HOGENOM" id="CLU_081378_0_3_6"/>
<dbReference type="UniPathway" id="UPA00048">
    <property type="reaction ID" value="UER00071"/>
</dbReference>
<dbReference type="GO" id="GO:0009316">
    <property type="term" value="C:3-isopropylmalate dehydratase complex"/>
    <property type="evidence" value="ECO:0007669"/>
    <property type="project" value="InterPro"/>
</dbReference>
<dbReference type="GO" id="GO:0003861">
    <property type="term" value="F:3-isopropylmalate dehydratase activity"/>
    <property type="evidence" value="ECO:0007669"/>
    <property type="project" value="UniProtKB-UniRule"/>
</dbReference>
<dbReference type="GO" id="GO:0009098">
    <property type="term" value="P:L-leucine biosynthetic process"/>
    <property type="evidence" value="ECO:0007669"/>
    <property type="project" value="UniProtKB-UniRule"/>
</dbReference>
<dbReference type="CDD" id="cd01577">
    <property type="entry name" value="IPMI_Swivel"/>
    <property type="match status" value="1"/>
</dbReference>
<dbReference type="FunFam" id="3.20.19.10:FF:000003">
    <property type="entry name" value="3-isopropylmalate dehydratase small subunit"/>
    <property type="match status" value="1"/>
</dbReference>
<dbReference type="Gene3D" id="3.20.19.10">
    <property type="entry name" value="Aconitase, domain 4"/>
    <property type="match status" value="1"/>
</dbReference>
<dbReference type="HAMAP" id="MF_01031">
    <property type="entry name" value="LeuD_type1"/>
    <property type="match status" value="1"/>
</dbReference>
<dbReference type="InterPro" id="IPR004431">
    <property type="entry name" value="3-IsopropMal_deHydase_ssu"/>
</dbReference>
<dbReference type="InterPro" id="IPR015928">
    <property type="entry name" value="Aconitase/3IPM_dehydase_swvl"/>
</dbReference>
<dbReference type="InterPro" id="IPR000573">
    <property type="entry name" value="AconitaseA/IPMdHydase_ssu_swvl"/>
</dbReference>
<dbReference type="InterPro" id="IPR033940">
    <property type="entry name" value="IPMI_Swivel"/>
</dbReference>
<dbReference type="InterPro" id="IPR050075">
    <property type="entry name" value="LeuD"/>
</dbReference>
<dbReference type="NCBIfam" id="TIGR00171">
    <property type="entry name" value="leuD"/>
    <property type="match status" value="1"/>
</dbReference>
<dbReference type="NCBIfam" id="NF002458">
    <property type="entry name" value="PRK01641.1"/>
    <property type="match status" value="1"/>
</dbReference>
<dbReference type="PANTHER" id="PTHR43345:SF5">
    <property type="entry name" value="3-ISOPROPYLMALATE DEHYDRATASE SMALL SUBUNIT"/>
    <property type="match status" value="1"/>
</dbReference>
<dbReference type="PANTHER" id="PTHR43345">
    <property type="entry name" value="3-ISOPROPYLMALATE DEHYDRATASE SMALL SUBUNIT 2-RELATED-RELATED"/>
    <property type="match status" value="1"/>
</dbReference>
<dbReference type="Pfam" id="PF00694">
    <property type="entry name" value="Aconitase_C"/>
    <property type="match status" value="1"/>
</dbReference>
<dbReference type="SUPFAM" id="SSF52016">
    <property type="entry name" value="LeuD/IlvD-like"/>
    <property type="match status" value="1"/>
</dbReference>
<organism>
    <name type="scientific">Xanthomonas oryzae pv. oryzae (strain MAFF 311018)</name>
    <dbReference type="NCBI Taxonomy" id="342109"/>
    <lineage>
        <taxon>Bacteria</taxon>
        <taxon>Pseudomonadati</taxon>
        <taxon>Pseudomonadota</taxon>
        <taxon>Gammaproteobacteria</taxon>
        <taxon>Lysobacterales</taxon>
        <taxon>Lysobacteraceae</taxon>
        <taxon>Xanthomonas</taxon>
    </lineage>
</organism>
<keyword id="KW-0028">Amino-acid biosynthesis</keyword>
<keyword id="KW-0100">Branched-chain amino acid biosynthesis</keyword>
<keyword id="KW-0432">Leucine biosynthesis</keyword>
<keyword id="KW-0456">Lyase</keyword>
<comment type="function">
    <text evidence="1">Catalyzes the isomerization between 2-isopropylmalate and 3-isopropylmalate, via the formation of 2-isopropylmaleate.</text>
</comment>
<comment type="catalytic activity">
    <reaction evidence="1">
        <text>(2R,3S)-3-isopropylmalate = (2S)-2-isopropylmalate</text>
        <dbReference type="Rhea" id="RHEA:32287"/>
        <dbReference type="ChEBI" id="CHEBI:1178"/>
        <dbReference type="ChEBI" id="CHEBI:35121"/>
        <dbReference type="EC" id="4.2.1.33"/>
    </reaction>
</comment>
<comment type="pathway">
    <text evidence="1">Amino-acid biosynthesis; L-leucine biosynthesis; L-leucine from 3-methyl-2-oxobutanoate: step 2/4.</text>
</comment>
<comment type="subunit">
    <text evidence="1">Heterodimer of LeuC and LeuD.</text>
</comment>
<comment type="similarity">
    <text evidence="1">Belongs to the LeuD family. LeuD type 1 subfamily.</text>
</comment>
<name>LEUD_XANOM</name>
<proteinExistence type="inferred from homology"/>
<feature type="chain" id="PRO_1000063857" description="3-isopropylmalate dehydratase small subunit">
    <location>
        <begin position="1"/>
        <end position="215"/>
    </location>
</feature>
<reference key="1">
    <citation type="journal article" date="2005" name="Jpn. Agric. Res. Q.">
        <title>Genome sequence of Xanthomonas oryzae pv. oryzae suggests contribution of large numbers of effector genes and insertion sequences to its race diversity.</title>
        <authorList>
            <person name="Ochiai H."/>
            <person name="Inoue Y."/>
            <person name="Takeya M."/>
            <person name="Sasaki A."/>
            <person name="Kaku H."/>
        </authorList>
    </citation>
    <scope>NUCLEOTIDE SEQUENCE [LARGE SCALE GENOMIC DNA]</scope>
    <source>
        <strain>MAFF 311018</strain>
    </source>
</reference>
<sequence length="215" mass="24280">MTPFTQHTGLVAPLDRANVDTDQIIPKQFLKSIKRTGFGPNLFDEWRYLDIGEPGRDNSTRPLNPEFVLNFPRYQGASVLLARENFGCGSSREHAPWALDEYGFRAVIAPSFADIFYNNSFKNGLLPIVLAEAEVDALFEQCLANEGYQLTVDLAAQRVRRPDGVEYSFDIDAFRKHCLLNGLDDIGLTLQEADAIGRFEQDHRARQPWLFGALQ</sequence>